<proteinExistence type="evidence at protein level"/>
<dbReference type="EC" id="5.2.1.8"/>
<dbReference type="EMBL" id="AL590842">
    <property type="protein sequence ID" value="CAL18877.1"/>
    <property type="molecule type" value="Genomic_DNA"/>
</dbReference>
<dbReference type="EMBL" id="AE009952">
    <property type="protein sequence ID" value="AAM87519.1"/>
    <property type="molecule type" value="Genomic_DNA"/>
</dbReference>
<dbReference type="EMBL" id="AE017042">
    <property type="protein sequence ID" value="AAS60467.1"/>
    <property type="status" value="ALT_INIT"/>
    <property type="molecule type" value="Genomic_DNA"/>
</dbReference>
<dbReference type="PIR" id="AD0024">
    <property type="entry name" value="AD0024"/>
</dbReference>
<dbReference type="RefSeq" id="WP_002212316.1">
    <property type="nucleotide sequence ID" value="NZ_WUCM01000004.1"/>
</dbReference>
<dbReference type="RefSeq" id="YP_002345275.1">
    <property type="nucleotide sequence ID" value="NC_003143.1"/>
</dbReference>
<dbReference type="SMR" id="Q7CFU4"/>
<dbReference type="STRING" id="214092.YPO0193"/>
<dbReference type="PaxDb" id="214092-YPO0193"/>
<dbReference type="DNASU" id="1148922"/>
<dbReference type="EnsemblBacteria" id="AAS60467">
    <property type="protein sequence ID" value="AAS60467"/>
    <property type="gene ID" value="YP_0191"/>
</dbReference>
<dbReference type="GeneID" id="57974410"/>
<dbReference type="KEGG" id="ype:YPO0193"/>
<dbReference type="KEGG" id="ypk:y3975"/>
<dbReference type="KEGG" id="ypm:YP_0191"/>
<dbReference type="PATRIC" id="fig|214092.21.peg.425"/>
<dbReference type="eggNOG" id="COG1047">
    <property type="taxonomic scope" value="Bacteria"/>
</dbReference>
<dbReference type="HOGENOM" id="CLU_098197_1_0_6"/>
<dbReference type="OMA" id="HSHEGGC"/>
<dbReference type="OrthoDB" id="9808891at2"/>
<dbReference type="Proteomes" id="UP000000815">
    <property type="component" value="Chromosome"/>
</dbReference>
<dbReference type="Proteomes" id="UP000001019">
    <property type="component" value="Chromosome"/>
</dbReference>
<dbReference type="Proteomes" id="UP000002490">
    <property type="component" value="Chromosome"/>
</dbReference>
<dbReference type="GO" id="GO:0005829">
    <property type="term" value="C:cytosol"/>
    <property type="evidence" value="ECO:0000318"/>
    <property type="project" value="GO_Central"/>
</dbReference>
<dbReference type="GO" id="GO:0046872">
    <property type="term" value="F:metal ion binding"/>
    <property type="evidence" value="ECO:0007669"/>
    <property type="project" value="UniProtKB-KW"/>
</dbReference>
<dbReference type="GO" id="GO:0003755">
    <property type="term" value="F:peptidyl-prolyl cis-trans isomerase activity"/>
    <property type="evidence" value="ECO:0000314"/>
    <property type="project" value="UniProtKB"/>
</dbReference>
<dbReference type="GO" id="GO:0042026">
    <property type="term" value="P:protein refolding"/>
    <property type="evidence" value="ECO:0000314"/>
    <property type="project" value="UniProtKB"/>
</dbReference>
<dbReference type="FunFam" id="2.40.10.330:FF:000001">
    <property type="entry name" value="Peptidyl-prolyl cis-trans isomerase"/>
    <property type="match status" value="1"/>
</dbReference>
<dbReference type="Gene3D" id="2.40.10.330">
    <property type="match status" value="1"/>
</dbReference>
<dbReference type="Gene3D" id="3.10.50.40">
    <property type="match status" value="1"/>
</dbReference>
<dbReference type="InterPro" id="IPR046357">
    <property type="entry name" value="PPIase_dom_sf"/>
</dbReference>
<dbReference type="InterPro" id="IPR001179">
    <property type="entry name" value="PPIase_FKBP_dom"/>
</dbReference>
<dbReference type="InterPro" id="IPR048261">
    <property type="entry name" value="SlpA/SlyD-like_ins_sf"/>
</dbReference>
<dbReference type="NCBIfam" id="NF008008">
    <property type="entry name" value="PRK10737.1"/>
    <property type="match status" value="1"/>
</dbReference>
<dbReference type="PANTHER" id="PTHR47861">
    <property type="entry name" value="FKBP-TYPE PEPTIDYL-PROLYL CIS-TRANS ISOMERASE SLYD"/>
    <property type="match status" value="1"/>
</dbReference>
<dbReference type="PANTHER" id="PTHR47861:SF3">
    <property type="entry name" value="FKBP-TYPE PEPTIDYL-PROLYL CIS-TRANS ISOMERASE SLYD"/>
    <property type="match status" value="1"/>
</dbReference>
<dbReference type="Pfam" id="PF00254">
    <property type="entry name" value="FKBP_C"/>
    <property type="match status" value="1"/>
</dbReference>
<dbReference type="SUPFAM" id="SSF54534">
    <property type="entry name" value="FKBP-like"/>
    <property type="match status" value="1"/>
</dbReference>
<dbReference type="PROSITE" id="PS50059">
    <property type="entry name" value="FKBP_PPIASE"/>
    <property type="match status" value="1"/>
</dbReference>
<feature type="chain" id="PRO_0000392673" description="FKBP-type peptidyl-prolyl cis-trans isomerase SlyD">
    <location>
        <begin position="1"/>
        <end position="195"/>
    </location>
</feature>
<feature type="domain" description="PPIase FKBP-type" evidence="3">
    <location>
        <begin position="6"/>
        <end position="95"/>
    </location>
</feature>
<feature type="region of interest" description="PPIase first part" evidence="1">
    <location>
        <begin position="1"/>
        <end position="69"/>
    </location>
</feature>
<feature type="region of interest" description="IF-chaperone" evidence="1">
    <location>
        <begin position="76"/>
        <end position="120"/>
    </location>
</feature>
<feature type="region of interest" description="PPIase second part" evidence="1">
    <location>
        <begin position="129"/>
        <end position="151"/>
    </location>
</feature>
<feature type="binding site" evidence="2">
    <location>
        <position position="166"/>
    </location>
    <ligand>
        <name>Ni(2+)</name>
        <dbReference type="ChEBI" id="CHEBI:49786"/>
    </ligand>
</feature>
<feature type="binding site" evidence="2">
    <location>
        <position position="167"/>
    </location>
    <ligand>
        <name>Ni(2+)</name>
        <dbReference type="ChEBI" id="CHEBI:49786"/>
    </ligand>
</feature>
<feature type="binding site" evidence="2">
    <location>
        <position position="186"/>
    </location>
    <ligand>
        <name>Ni(2+)</name>
        <dbReference type="ChEBI" id="CHEBI:49786"/>
    </ligand>
</feature>
<feature type="binding site" evidence="2">
    <location>
        <position position="192"/>
    </location>
    <ligand>
        <name>Ni(2+)</name>
        <dbReference type="ChEBI" id="CHEBI:49786"/>
    </ligand>
</feature>
<feature type="binding site" evidence="2">
    <location>
        <position position="194"/>
    </location>
    <ligand>
        <name>Ni(2+)</name>
        <dbReference type="ChEBI" id="CHEBI:49786"/>
    </ligand>
</feature>
<feature type="sequence variant" description="In strain: 91001 / Biovar Mediaevalis.">
    <location>
        <begin position="180"/>
        <end position="181"/>
    </location>
</feature>
<name>SLYD_YERPE</name>
<keyword id="KW-0143">Chaperone</keyword>
<keyword id="KW-0963">Cytoplasm</keyword>
<keyword id="KW-0413">Isomerase</keyword>
<keyword id="KW-0479">Metal-binding</keyword>
<keyword id="KW-0533">Nickel</keyword>
<keyword id="KW-1185">Reference proteome</keyword>
<keyword id="KW-0697">Rotamase</keyword>
<sequence>MKVTKDLVVSLAYQVRTEDGVLVDESPVSAPLDYLHGHGSLIAGLENALEGHEAGDSFDVRVNADEGYGSYDENLVQRVPKDVFMGVDELEVGMRFLADTDQGPVPVEITAVEDEHVVVDGNHMLAGQDLNFHVEVVAVREATEEELQHGHVHGEHDHHHEHGDGCCGGHGHDDHEHEHEHGKGGCGKSGGCGCH</sequence>
<evidence type="ECO:0000250" key="1"/>
<evidence type="ECO:0000255" key="2"/>
<evidence type="ECO:0000255" key="3">
    <source>
        <dbReference type="PROSITE-ProRule" id="PRU00277"/>
    </source>
</evidence>
<evidence type="ECO:0000269" key="4">
    <source>
    </source>
</evidence>
<evidence type="ECO:0000305" key="5"/>
<organism>
    <name type="scientific">Yersinia pestis</name>
    <dbReference type="NCBI Taxonomy" id="632"/>
    <lineage>
        <taxon>Bacteria</taxon>
        <taxon>Pseudomonadati</taxon>
        <taxon>Pseudomonadota</taxon>
        <taxon>Gammaproteobacteria</taxon>
        <taxon>Enterobacterales</taxon>
        <taxon>Yersiniaceae</taxon>
        <taxon>Yersinia</taxon>
    </lineage>
</organism>
<protein>
    <recommendedName>
        <fullName>FKBP-type peptidyl-prolyl cis-trans isomerase SlyD</fullName>
        <shortName>PPIase</shortName>
        <ecNumber>5.2.1.8</ecNumber>
    </recommendedName>
    <alternativeName>
        <fullName>Metallochaperone SlyD</fullName>
    </alternativeName>
</protein>
<comment type="function">
    <text evidence="4">Folding helper with both chaperone and peptidyl-prolyl cis-trans isomerase (PPIase) activities. Chaperone activity prevents aggregation of unfolded or partially folded proteins and promotes their correct folding. PPIases catalyze the cis-trans isomerization of Xaa-Pro bonds of peptides, which accelerates slow steps of protein folding and thus shortens the lifetime of intermediates. Both strategies lower the concentration of intermediates and increase the productivity and yield of the folding reaction.</text>
</comment>
<comment type="function">
    <text evidence="1">Also involved in hydrogenase metallocenter assembly, probably by participating in the nickel insertion step. This function in hydrogenase biosynthesis requires chaperone activity and the presence of the metal-binding domain, but not PPIase activity (By similarity).</text>
</comment>
<comment type="catalytic activity">
    <reaction evidence="4">
        <text>[protein]-peptidylproline (omega=180) = [protein]-peptidylproline (omega=0)</text>
        <dbReference type="Rhea" id="RHEA:16237"/>
        <dbReference type="Rhea" id="RHEA-COMP:10747"/>
        <dbReference type="Rhea" id="RHEA-COMP:10748"/>
        <dbReference type="ChEBI" id="CHEBI:83833"/>
        <dbReference type="ChEBI" id="CHEBI:83834"/>
        <dbReference type="EC" id="5.2.1.8"/>
    </reaction>
</comment>
<comment type="subcellular location">
    <subcellularLocation>
        <location evidence="1">Cytoplasm</location>
    </subcellularLocation>
</comment>
<comment type="domain">
    <text evidence="1">The N-terminal region consists of two globular folded domains that contain prolyl isomerase and chaperone activities.</text>
</comment>
<comment type="domain">
    <text evidence="1">The C-terminal region binds nickel ions.</text>
</comment>
<comment type="similarity">
    <text evidence="5">Belongs to the FKBP-type PPIase family.</text>
</comment>
<comment type="sequence caution" evidence="5">
    <conflict type="erroneous initiation">
        <sequence resource="EMBL-CDS" id="AAS60467"/>
    </conflict>
</comment>
<reference key="1">
    <citation type="journal article" date="2001" name="Nature">
        <title>Genome sequence of Yersinia pestis, the causative agent of plague.</title>
        <authorList>
            <person name="Parkhill J."/>
            <person name="Wren B.W."/>
            <person name="Thomson N.R."/>
            <person name="Titball R.W."/>
            <person name="Holden M.T.G."/>
            <person name="Prentice M.B."/>
            <person name="Sebaihia M."/>
            <person name="James K.D."/>
            <person name="Churcher C.M."/>
            <person name="Mungall K.L."/>
            <person name="Baker S."/>
            <person name="Basham D."/>
            <person name="Bentley S.D."/>
            <person name="Brooks K."/>
            <person name="Cerdeno-Tarraga A.-M."/>
            <person name="Chillingworth T."/>
            <person name="Cronin A."/>
            <person name="Davies R.M."/>
            <person name="Davis P."/>
            <person name="Dougan G."/>
            <person name="Feltwell T."/>
            <person name="Hamlin N."/>
            <person name="Holroyd S."/>
            <person name="Jagels K."/>
            <person name="Karlyshev A.V."/>
            <person name="Leather S."/>
            <person name="Moule S."/>
            <person name="Oyston P.C.F."/>
            <person name="Quail M.A."/>
            <person name="Rutherford K.M."/>
            <person name="Simmonds M."/>
            <person name="Skelton J."/>
            <person name="Stevens K."/>
            <person name="Whitehead S."/>
            <person name="Barrell B.G."/>
        </authorList>
    </citation>
    <scope>NUCLEOTIDE SEQUENCE [LARGE SCALE GENOMIC DNA]</scope>
    <source>
        <strain>CO-92 / Biovar Orientalis</strain>
    </source>
</reference>
<reference key="2">
    <citation type="journal article" date="2002" name="J. Bacteriol.">
        <title>Genome sequence of Yersinia pestis KIM.</title>
        <authorList>
            <person name="Deng W."/>
            <person name="Burland V."/>
            <person name="Plunkett G. III"/>
            <person name="Boutin A."/>
            <person name="Mayhew G.F."/>
            <person name="Liss P."/>
            <person name="Perna N.T."/>
            <person name="Rose D.J."/>
            <person name="Mau B."/>
            <person name="Zhou S."/>
            <person name="Schwartz D.C."/>
            <person name="Fetherston J.D."/>
            <person name="Lindler L.E."/>
            <person name="Brubaker R.R."/>
            <person name="Plano G.V."/>
            <person name="Straley S.C."/>
            <person name="McDonough K.A."/>
            <person name="Nilles M.L."/>
            <person name="Matson J.S."/>
            <person name="Blattner F.R."/>
            <person name="Perry R.D."/>
        </authorList>
    </citation>
    <scope>NUCLEOTIDE SEQUENCE [LARGE SCALE GENOMIC DNA]</scope>
    <source>
        <strain>KIM10+ / Biovar Mediaevalis</strain>
    </source>
</reference>
<reference key="3">
    <citation type="journal article" date="2004" name="DNA Res.">
        <title>Complete genome sequence of Yersinia pestis strain 91001, an isolate avirulent to humans.</title>
        <authorList>
            <person name="Song Y."/>
            <person name="Tong Z."/>
            <person name="Wang J."/>
            <person name="Wang L."/>
            <person name="Guo Z."/>
            <person name="Han Y."/>
            <person name="Zhang J."/>
            <person name="Pei D."/>
            <person name="Zhou D."/>
            <person name="Qin H."/>
            <person name="Pang X."/>
            <person name="Han Y."/>
            <person name="Zhai J."/>
            <person name="Li M."/>
            <person name="Cui B."/>
            <person name="Qi Z."/>
            <person name="Jin L."/>
            <person name="Dai R."/>
            <person name="Chen F."/>
            <person name="Li S."/>
            <person name="Ye C."/>
            <person name="Du Z."/>
            <person name="Lin W."/>
            <person name="Wang J."/>
            <person name="Yu J."/>
            <person name="Yang H."/>
            <person name="Wang J."/>
            <person name="Huang P."/>
            <person name="Yang R."/>
        </authorList>
    </citation>
    <scope>NUCLEOTIDE SEQUENCE [LARGE SCALE GENOMIC DNA]</scope>
    <source>
        <strain>91001 / Biovar Mediaevalis</strain>
    </source>
</reference>
<reference key="4">
    <citation type="journal article" date="2006" name="Biochemistry">
        <title>SlyD proteins from different species exhibit high prolyl isomerase and chaperone activities.</title>
        <authorList>
            <person name="Scholz C."/>
            <person name="Eckert B."/>
            <person name="Hagn F."/>
            <person name="Schaarschmidt P."/>
            <person name="Balbach J."/>
            <person name="Schmid F.X."/>
        </authorList>
    </citation>
    <scope>FUNCTION AS A CHAPERONE AND A PPIASE</scope>
    <scope>CATALYTIC ACTIVITY</scope>
</reference>
<gene>
    <name type="primary">slyD</name>
    <name type="ordered locus">YPO0193</name>
    <name type="ordered locus">y3975</name>
    <name type="ordered locus">YP_0191</name>
</gene>
<accession>Q7CFU4</accession>
<accession>Q74XZ9</accession>